<feature type="chain" id="PRO_0000293506" description="Proton extrusion protein PxcA">
    <location>
        <begin position="1"/>
        <end position="477"/>
    </location>
</feature>
<feature type="transmembrane region" description="Helical" evidence="1">
    <location>
        <begin position="239"/>
        <end position="259"/>
    </location>
</feature>
<feature type="transmembrane region" description="Helical" evidence="1">
    <location>
        <begin position="354"/>
        <end position="374"/>
    </location>
</feature>
<feature type="transmembrane region" description="Helical" evidence="1">
    <location>
        <begin position="437"/>
        <end position="457"/>
    </location>
</feature>
<accession>Q10YZ5</accession>
<evidence type="ECO:0000255" key="1">
    <source>
        <dbReference type="HAMAP-Rule" id="MF_01308"/>
    </source>
</evidence>
<keyword id="KW-0997">Cell inner membrane</keyword>
<keyword id="KW-1003">Cell membrane</keyword>
<keyword id="KW-0375">Hydrogen ion transport</keyword>
<keyword id="KW-0406">Ion transport</keyword>
<keyword id="KW-0472">Membrane</keyword>
<keyword id="KW-0812">Transmembrane</keyword>
<keyword id="KW-1133">Transmembrane helix</keyword>
<keyword id="KW-0813">Transport</keyword>
<protein>
    <recommendedName>
        <fullName evidence="1">Proton extrusion protein PxcA</fullName>
    </recommendedName>
</protein>
<dbReference type="EMBL" id="CP000393">
    <property type="protein sequence ID" value="ABG52529.1"/>
    <property type="molecule type" value="Genomic_DNA"/>
</dbReference>
<dbReference type="RefSeq" id="WP_011612872.1">
    <property type="nucleotide sequence ID" value="NC_008312.1"/>
</dbReference>
<dbReference type="SMR" id="Q10YZ5"/>
<dbReference type="STRING" id="203124.Tery_3436"/>
<dbReference type="KEGG" id="ter:Tery_3436"/>
<dbReference type="eggNOG" id="ENOG502Z8DN">
    <property type="taxonomic scope" value="Bacteria"/>
</dbReference>
<dbReference type="HOGENOM" id="CLU_690401_0_0_3"/>
<dbReference type="OrthoDB" id="418298at2"/>
<dbReference type="GO" id="GO:0005886">
    <property type="term" value="C:plasma membrane"/>
    <property type="evidence" value="ECO:0007669"/>
    <property type="project" value="UniProtKB-SubCell"/>
</dbReference>
<dbReference type="GO" id="GO:0015078">
    <property type="term" value="F:proton transmembrane transporter activity"/>
    <property type="evidence" value="ECO:0007669"/>
    <property type="project" value="UniProtKB-UniRule"/>
</dbReference>
<dbReference type="HAMAP" id="MF_01308">
    <property type="entry name" value="CemA_PxcA"/>
    <property type="match status" value="1"/>
</dbReference>
<dbReference type="InterPro" id="IPR004282">
    <property type="entry name" value="CemA"/>
</dbReference>
<dbReference type="NCBIfam" id="NF002703">
    <property type="entry name" value="PRK02507.1-1"/>
    <property type="match status" value="1"/>
</dbReference>
<dbReference type="PANTHER" id="PTHR33650:SF2">
    <property type="entry name" value="CHLOROPLAST ENVELOPE MEMBRANE PROTEIN"/>
    <property type="match status" value="1"/>
</dbReference>
<dbReference type="PANTHER" id="PTHR33650">
    <property type="entry name" value="CHLOROPLAST ENVELOPE MEMBRANE PROTEIN-RELATED"/>
    <property type="match status" value="1"/>
</dbReference>
<dbReference type="Pfam" id="PF03040">
    <property type="entry name" value="CemA"/>
    <property type="match status" value="1"/>
</dbReference>
<organism>
    <name type="scientific">Trichodesmium erythraeum (strain IMS101)</name>
    <dbReference type="NCBI Taxonomy" id="203124"/>
    <lineage>
        <taxon>Bacteria</taxon>
        <taxon>Bacillati</taxon>
        <taxon>Cyanobacteriota</taxon>
        <taxon>Cyanophyceae</taxon>
        <taxon>Oscillatoriophycideae</taxon>
        <taxon>Oscillatoriales</taxon>
        <taxon>Microcoleaceae</taxon>
        <taxon>Trichodesmium</taxon>
    </lineage>
</organism>
<comment type="function">
    <text evidence="1">Required for H(+) efflux immediately after light irradiation to form a rapid H(+) concentration gradient across the thylakoid membranes. Together with PxcL, contributes to transient H(+) uptake following dark to light transition.</text>
</comment>
<comment type="subcellular location">
    <subcellularLocation>
        <location evidence="1">Cell inner membrane</location>
        <topology evidence="1">Multi-pass membrane protein</topology>
    </subcellularLocation>
</comment>
<comment type="similarity">
    <text evidence="1">Belongs to the CemA family.</text>
</comment>
<sequence>MAISPWKQFKLSVLNANQWFRKTPERALNMAYDAANKIRSIEEEHFEGRKISNVSISYSNSTKSYFNSQLNRYLKIIQVRLAEFNTSISVVGTLDQNKVDKQKDKFDQNYQQEFPGRSSIILDKLEFIDQVSSRYYKSSNHEAQELNTDLEIPHSSSSIAIVSSNVNVNNYPNNVRAGSSQNQNNLAELKSNIPNTNFLPRSLLKTFKKIKQELDPEAETEVIRKFRKSQIKTLTSVRFILLVILVPLLIHQLSKITFVGYLVDNFMSLPHQQAELFLNSNMEEEALVKLHQYEEKLHFKMYLGQAPELFPELYESGKEITEIPKSEREELIEHKVEKKAQEIALEYKAKGNNGIKNIFCDFISLITFVIIISTRKRELEVLKSFMDDVVYGLSDSAKAFIIILLTDMFVGFHSPHGWEVILENITRHFGLPESRDFNFLFIATFPVILDAVFKYWIFRYLNRSSPSAVATYKNMNE</sequence>
<gene>
    <name evidence="1" type="primary">pxcA</name>
    <name type="ordered locus">Tery_3436</name>
</gene>
<proteinExistence type="inferred from homology"/>
<name>PXCA_TRIEI</name>
<reference key="1">
    <citation type="journal article" date="2015" name="Proc. Natl. Acad. Sci. U.S.A.">
        <title>Trichodesmium genome maintains abundant, widespread noncoding DNA in situ, despite oligotrophic lifestyle.</title>
        <authorList>
            <person name="Walworth N."/>
            <person name="Pfreundt U."/>
            <person name="Nelson W.C."/>
            <person name="Mincer T."/>
            <person name="Heidelberg J.F."/>
            <person name="Fu F."/>
            <person name="Waterbury J.B."/>
            <person name="Glavina del Rio T."/>
            <person name="Goodwin L."/>
            <person name="Kyrpides N.C."/>
            <person name="Land M.L."/>
            <person name="Woyke T."/>
            <person name="Hutchins D.A."/>
            <person name="Hess W.R."/>
            <person name="Webb E.A."/>
        </authorList>
    </citation>
    <scope>NUCLEOTIDE SEQUENCE [LARGE SCALE GENOMIC DNA]</scope>
    <source>
        <strain>IMS101</strain>
    </source>
</reference>